<sequence length="253" mass="29887">MVNGIYTKSFLERIQEELPEWQRIAFELLAETLGDDADTFPCIPGRQAFLTDQLRIAFAGDPRENRTAEELAPLLAEYGKISRDTGKYASLVVLFDTPEDLAEHYSIEAYEELFWRFLNRLSHQDEKEWPEDIPADPEHYKWEFCFDGEPYFILCATPGHEARRSRSFPFFMVTFQPRWVFDDLNGSTAFGRNMSRLIRSRLEAYDQAPIHPQLGWYGGKDNREWKQYFLRDDEKQVSKCPFSYLKNMFNKMK</sequence>
<keyword id="KW-1185">Reference proteome</keyword>
<evidence type="ECO:0000305" key="1"/>
<name>YCGG_BACSU</name>
<protein>
    <recommendedName>
        <fullName>Uncharacterized protein YcgG</fullName>
    </recommendedName>
</protein>
<proteinExistence type="inferred from homology"/>
<organism>
    <name type="scientific">Bacillus subtilis (strain 168)</name>
    <dbReference type="NCBI Taxonomy" id="224308"/>
    <lineage>
        <taxon>Bacteria</taxon>
        <taxon>Bacillati</taxon>
        <taxon>Bacillota</taxon>
        <taxon>Bacilli</taxon>
        <taxon>Bacillales</taxon>
        <taxon>Bacillaceae</taxon>
        <taxon>Bacillus</taxon>
    </lineage>
</organism>
<comment type="similarity">
    <text evidence="1">Belongs to the DcsA family.</text>
</comment>
<comment type="sequence caution" evidence="1">
    <conflict type="erroneous termination">
        <sequence resource="EMBL-CDS" id="BAA08944"/>
    </conflict>
    <text>Truncated C-terminus.</text>
</comment>
<comment type="sequence caution" evidence="1">
    <conflict type="frameshift">
        <sequence resource="EMBL-CDS" id="BAA08944"/>
    </conflict>
</comment>
<feature type="chain" id="PRO_0000360442" description="Uncharacterized protein YcgG">
    <location>
        <begin position="1"/>
        <end position="253"/>
    </location>
</feature>
<accession>P94382</accession>
<accession>Q797R0</accession>
<reference key="1">
    <citation type="journal article" date="1996" name="Microbiology">
        <title>The 25 degrees-36 degrees region of the Bacillus subtilis chromosome: determination of the sequence of a 146 kb segment and identification of 113 genes.</title>
        <authorList>
            <person name="Yamane K."/>
            <person name="Kumano M."/>
            <person name="Kurita K."/>
        </authorList>
    </citation>
    <scope>NUCLEOTIDE SEQUENCE [GENOMIC DNA]</scope>
    <source>
        <strain>168</strain>
    </source>
</reference>
<reference key="2">
    <citation type="journal article" date="1997" name="Nature">
        <title>The complete genome sequence of the Gram-positive bacterium Bacillus subtilis.</title>
        <authorList>
            <person name="Kunst F."/>
            <person name="Ogasawara N."/>
            <person name="Moszer I."/>
            <person name="Albertini A.M."/>
            <person name="Alloni G."/>
            <person name="Azevedo V."/>
            <person name="Bertero M.G."/>
            <person name="Bessieres P."/>
            <person name="Bolotin A."/>
            <person name="Borchert S."/>
            <person name="Borriss R."/>
            <person name="Boursier L."/>
            <person name="Brans A."/>
            <person name="Braun M."/>
            <person name="Brignell S.C."/>
            <person name="Bron S."/>
            <person name="Brouillet S."/>
            <person name="Bruschi C.V."/>
            <person name="Caldwell B."/>
            <person name="Capuano V."/>
            <person name="Carter N.M."/>
            <person name="Choi S.-K."/>
            <person name="Codani J.-J."/>
            <person name="Connerton I.F."/>
            <person name="Cummings N.J."/>
            <person name="Daniel R.A."/>
            <person name="Denizot F."/>
            <person name="Devine K.M."/>
            <person name="Duesterhoeft A."/>
            <person name="Ehrlich S.D."/>
            <person name="Emmerson P.T."/>
            <person name="Entian K.-D."/>
            <person name="Errington J."/>
            <person name="Fabret C."/>
            <person name="Ferrari E."/>
            <person name="Foulger D."/>
            <person name="Fritz C."/>
            <person name="Fujita M."/>
            <person name="Fujita Y."/>
            <person name="Fuma S."/>
            <person name="Galizzi A."/>
            <person name="Galleron N."/>
            <person name="Ghim S.-Y."/>
            <person name="Glaser P."/>
            <person name="Goffeau A."/>
            <person name="Golightly E.J."/>
            <person name="Grandi G."/>
            <person name="Guiseppi G."/>
            <person name="Guy B.J."/>
            <person name="Haga K."/>
            <person name="Haiech J."/>
            <person name="Harwood C.R."/>
            <person name="Henaut A."/>
            <person name="Hilbert H."/>
            <person name="Holsappel S."/>
            <person name="Hosono S."/>
            <person name="Hullo M.-F."/>
            <person name="Itaya M."/>
            <person name="Jones L.-M."/>
            <person name="Joris B."/>
            <person name="Karamata D."/>
            <person name="Kasahara Y."/>
            <person name="Klaerr-Blanchard M."/>
            <person name="Klein C."/>
            <person name="Kobayashi Y."/>
            <person name="Koetter P."/>
            <person name="Koningstein G."/>
            <person name="Krogh S."/>
            <person name="Kumano M."/>
            <person name="Kurita K."/>
            <person name="Lapidus A."/>
            <person name="Lardinois S."/>
            <person name="Lauber J."/>
            <person name="Lazarevic V."/>
            <person name="Lee S.-M."/>
            <person name="Levine A."/>
            <person name="Liu H."/>
            <person name="Masuda S."/>
            <person name="Mauel C."/>
            <person name="Medigue C."/>
            <person name="Medina N."/>
            <person name="Mellado R.P."/>
            <person name="Mizuno M."/>
            <person name="Moestl D."/>
            <person name="Nakai S."/>
            <person name="Noback M."/>
            <person name="Noone D."/>
            <person name="O'Reilly M."/>
            <person name="Ogawa K."/>
            <person name="Ogiwara A."/>
            <person name="Oudega B."/>
            <person name="Park S.-H."/>
            <person name="Parro V."/>
            <person name="Pohl T.M."/>
            <person name="Portetelle D."/>
            <person name="Porwollik S."/>
            <person name="Prescott A.M."/>
            <person name="Presecan E."/>
            <person name="Pujic P."/>
            <person name="Purnelle B."/>
            <person name="Rapoport G."/>
            <person name="Rey M."/>
            <person name="Reynolds S."/>
            <person name="Rieger M."/>
            <person name="Rivolta C."/>
            <person name="Rocha E."/>
            <person name="Roche B."/>
            <person name="Rose M."/>
            <person name="Sadaie Y."/>
            <person name="Sato T."/>
            <person name="Scanlan E."/>
            <person name="Schleich S."/>
            <person name="Schroeter R."/>
            <person name="Scoffone F."/>
            <person name="Sekiguchi J."/>
            <person name="Sekowska A."/>
            <person name="Seror S.J."/>
            <person name="Serror P."/>
            <person name="Shin B.-S."/>
            <person name="Soldo B."/>
            <person name="Sorokin A."/>
            <person name="Tacconi E."/>
            <person name="Takagi T."/>
            <person name="Takahashi H."/>
            <person name="Takemaru K."/>
            <person name="Takeuchi M."/>
            <person name="Tamakoshi A."/>
            <person name="Tanaka T."/>
            <person name="Terpstra P."/>
            <person name="Tognoni A."/>
            <person name="Tosato V."/>
            <person name="Uchiyama S."/>
            <person name="Vandenbol M."/>
            <person name="Vannier F."/>
            <person name="Vassarotti A."/>
            <person name="Viari A."/>
            <person name="Wambutt R."/>
            <person name="Wedler E."/>
            <person name="Wedler H."/>
            <person name="Weitzenegger T."/>
            <person name="Winters P."/>
            <person name="Wipat A."/>
            <person name="Yamamoto H."/>
            <person name="Yamane K."/>
            <person name="Yasumoto K."/>
            <person name="Yata K."/>
            <person name="Yoshida K."/>
            <person name="Yoshikawa H.-F."/>
            <person name="Zumstein E."/>
            <person name="Yoshikawa H."/>
            <person name="Danchin A."/>
        </authorList>
    </citation>
    <scope>NUCLEOTIDE SEQUENCE [LARGE SCALE GENOMIC DNA]</scope>
    <source>
        <strain>168</strain>
    </source>
</reference>
<reference key="3">
    <citation type="journal article" date="2009" name="Microbiology">
        <title>From a consortium sequence to a unified sequence: the Bacillus subtilis 168 reference genome a decade later.</title>
        <authorList>
            <person name="Barbe V."/>
            <person name="Cruveiller S."/>
            <person name="Kunst F."/>
            <person name="Lenoble P."/>
            <person name="Meurice G."/>
            <person name="Sekowska A."/>
            <person name="Vallenet D."/>
            <person name="Wang T."/>
            <person name="Moszer I."/>
            <person name="Medigue C."/>
            <person name="Danchin A."/>
        </authorList>
    </citation>
    <scope>SEQUENCE REVISION</scope>
</reference>
<gene>
    <name type="primary">ycgG</name>
    <name type="ordered locus">BSU03100</name>
</gene>
<dbReference type="EMBL" id="D50453">
    <property type="protein sequence ID" value="BAA08944.1"/>
    <property type="status" value="ALT_SEQ"/>
    <property type="molecule type" value="Genomic_DNA"/>
</dbReference>
<dbReference type="EMBL" id="AL009126">
    <property type="protein sequence ID" value="CAB12104.2"/>
    <property type="molecule type" value="Genomic_DNA"/>
</dbReference>
<dbReference type="PIR" id="B69758">
    <property type="entry name" value="B69758"/>
</dbReference>
<dbReference type="RefSeq" id="NP_388192.2">
    <property type="nucleotide sequence ID" value="NC_000964.3"/>
</dbReference>
<dbReference type="RefSeq" id="WP_003246374.1">
    <property type="nucleotide sequence ID" value="NZ_OZ025638.1"/>
</dbReference>
<dbReference type="FunCoup" id="P94382">
    <property type="interactions" value="33"/>
</dbReference>
<dbReference type="STRING" id="224308.BSU03100"/>
<dbReference type="PaxDb" id="224308-BSU03100"/>
<dbReference type="EnsemblBacteria" id="CAB12104">
    <property type="protein sequence ID" value="CAB12104"/>
    <property type="gene ID" value="BSU_03100"/>
</dbReference>
<dbReference type="GeneID" id="938350"/>
<dbReference type="KEGG" id="bsu:BSU03100"/>
<dbReference type="PATRIC" id="fig|224308.179.peg.324"/>
<dbReference type="eggNOG" id="COG3403">
    <property type="taxonomic scope" value="Bacteria"/>
</dbReference>
<dbReference type="InParanoid" id="P94382"/>
<dbReference type="OrthoDB" id="112290at2"/>
<dbReference type="PhylomeDB" id="P94382"/>
<dbReference type="BioCyc" id="BSUB:BSU03100-MONOMER"/>
<dbReference type="Proteomes" id="UP000001570">
    <property type="component" value="Chromosome"/>
</dbReference>
<dbReference type="InterPro" id="IPR014988">
    <property type="entry name" value="Uncharacterised_YqcI/YcgG"/>
</dbReference>
<dbReference type="PANTHER" id="PTHR40045">
    <property type="entry name" value="YCGG FAMILY PROTEIN"/>
    <property type="match status" value="1"/>
</dbReference>
<dbReference type="PANTHER" id="PTHR40045:SF1">
    <property type="entry name" value="YQCI_YCGG FAMILY PROTEIN"/>
    <property type="match status" value="1"/>
</dbReference>
<dbReference type="Pfam" id="PF08892">
    <property type="entry name" value="YqcI_YcgG"/>
    <property type="match status" value="1"/>
</dbReference>